<reference key="1">
    <citation type="journal article" date="1971" name="Biochem. Biophys. Res. Commun.">
        <title>Amino acid sequence of toxin A from the venom of the Indian cobra (Naja naja).</title>
        <authorList>
            <person name="Nakai K."/>
            <person name="Sasaki T."/>
            <person name="Hayashi K."/>
        </authorList>
    </citation>
    <scope>PROTEIN SEQUENCE</scope>
    <scope>TOXIC DOSE</scope>
    <scope>SUBCELLULAR LOCATION</scope>
    <source>
        <tissue>Venom</tissue>
    </source>
</reference>
<keyword id="KW-0008">Acetylcholine receptor inhibiting toxin</keyword>
<keyword id="KW-0903">Direct protein sequencing</keyword>
<keyword id="KW-1015">Disulfide bond</keyword>
<keyword id="KW-0872">Ion channel impairing toxin</keyword>
<keyword id="KW-0528">Neurotoxin</keyword>
<keyword id="KW-0629">Postsynaptic neurotoxin</keyword>
<keyword id="KW-1185">Reference proteome</keyword>
<keyword id="KW-0964">Secreted</keyword>
<keyword id="KW-0800">Toxin</keyword>
<feature type="chain" id="PRO_0000093547" description="Long neurotoxin 1" evidence="3">
    <location>
        <begin position="1"/>
        <end position="71"/>
    </location>
</feature>
<feature type="disulfide bond" evidence="1">
    <location>
        <begin position="3"/>
        <end position="20"/>
    </location>
</feature>
<feature type="disulfide bond" evidence="1">
    <location>
        <begin position="14"/>
        <end position="41"/>
    </location>
</feature>
<feature type="disulfide bond" evidence="1">
    <location>
        <begin position="26"/>
        <end position="30"/>
    </location>
</feature>
<feature type="disulfide bond" evidence="1">
    <location>
        <begin position="45"/>
        <end position="56"/>
    </location>
</feature>
<feature type="disulfide bond" evidence="1">
    <location>
        <begin position="57"/>
        <end position="62"/>
    </location>
</feature>
<accession>P25668</accession>
<accession>P01392</accession>
<dbReference type="SMR" id="P25668"/>
<dbReference type="Proteomes" id="UP000694559">
    <property type="component" value="Unplaced"/>
</dbReference>
<dbReference type="GO" id="GO:0005576">
    <property type="term" value="C:extracellular region"/>
    <property type="evidence" value="ECO:0007669"/>
    <property type="project" value="UniProtKB-SubCell"/>
</dbReference>
<dbReference type="GO" id="GO:0030550">
    <property type="term" value="F:acetylcholine receptor inhibitor activity"/>
    <property type="evidence" value="ECO:0007669"/>
    <property type="project" value="UniProtKB-KW"/>
</dbReference>
<dbReference type="GO" id="GO:0099106">
    <property type="term" value="F:ion channel regulator activity"/>
    <property type="evidence" value="ECO:0007669"/>
    <property type="project" value="UniProtKB-KW"/>
</dbReference>
<dbReference type="GO" id="GO:0090729">
    <property type="term" value="F:toxin activity"/>
    <property type="evidence" value="ECO:0007669"/>
    <property type="project" value="UniProtKB-KW"/>
</dbReference>
<dbReference type="CDD" id="cd00206">
    <property type="entry name" value="TFP_snake_toxin"/>
    <property type="match status" value="1"/>
</dbReference>
<dbReference type="Gene3D" id="2.10.60.10">
    <property type="entry name" value="CD59"/>
    <property type="match status" value="1"/>
</dbReference>
<dbReference type="InterPro" id="IPR003571">
    <property type="entry name" value="Snake_3FTx"/>
</dbReference>
<dbReference type="InterPro" id="IPR045860">
    <property type="entry name" value="Snake_toxin-like_sf"/>
</dbReference>
<dbReference type="InterPro" id="IPR018354">
    <property type="entry name" value="Snake_toxin_con_site"/>
</dbReference>
<dbReference type="InterPro" id="IPR054131">
    <property type="entry name" value="Toxin_cobra-type"/>
</dbReference>
<dbReference type="Pfam" id="PF21947">
    <property type="entry name" value="Toxin_cobra-type"/>
    <property type="match status" value="1"/>
</dbReference>
<dbReference type="SUPFAM" id="SSF57302">
    <property type="entry name" value="Snake toxin-like"/>
    <property type="match status" value="1"/>
</dbReference>
<dbReference type="PROSITE" id="PS00272">
    <property type="entry name" value="SNAKE_TOXIN"/>
    <property type="match status" value="1"/>
</dbReference>
<evidence type="ECO:0000250" key="1">
    <source>
        <dbReference type="UniProtKB" id="P25671"/>
    </source>
</evidence>
<evidence type="ECO:0000250" key="2">
    <source>
        <dbReference type="UniProtKB" id="P60615"/>
    </source>
</evidence>
<evidence type="ECO:0000269" key="3">
    <source>
    </source>
</evidence>
<evidence type="ECO:0000303" key="4">
    <source>
    </source>
</evidence>
<evidence type="ECO:0000305" key="5"/>
<evidence type="ECO:0000305" key="6">
    <source>
    </source>
</evidence>
<sequence>IRCFITPDITSKDCPNGHVCYTKTWCDGFCSIRGKRVDLGCAATCPTVRTGVDIQCCSTDDCDPFPTRKRP</sequence>
<proteinExistence type="evidence at protein level"/>
<name>3L21_NAJNA</name>
<protein>
    <recommendedName>
        <fullName>Long neurotoxin 1</fullName>
    </recommendedName>
    <alternativeName>
        <fullName evidence="4">Toxin A</fullName>
    </alternativeName>
</protein>
<organism>
    <name type="scientific">Naja naja</name>
    <name type="common">Indian cobra</name>
    <dbReference type="NCBI Taxonomy" id="35670"/>
    <lineage>
        <taxon>Eukaryota</taxon>
        <taxon>Metazoa</taxon>
        <taxon>Chordata</taxon>
        <taxon>Craniata</taxon>
        <taxon>Vertebrata</taxon>
        <taxon>Euteleostomi</taxon>
        <taxon>Lepidosauria</taxon>
        <taxon>Squamata</taxon>
        <taxon>Bifurcata</taxon>
        <taxon>Unidentata</taxon>
        <taxon>Episquamata</taxon>
        <taxon>Toxicofera</taxon>
        <taxon>Serpentes</taxon>
        <taxon>Colubroidea</taxon>
        <taxon>Elapidae</taxon>
        <taxon>Elapinae</taxon>
        <taxon>Naja</taxon>
    </lineage>
</organism>
<comment type="function">
    <text evidence="2">Binds with high affinity to muscular (alpha-1/CHRNA1) and neuronal (alpha-7/CHRNA7) nicotinic acetylcholine receptor (nAChR) and inhibits acetylcholine from binding to the receptor, thereby impairing neuromuscular and neuronal transmission.</text>
</comment>
<comment type="subcellular location">
    <subcellularLocation>
        <location evidence="3">Secreted</location>
    </subcellularLocation>
</comment>
<comment type="tissue specificity">
    <text evidence="6">Expressed by the venom gland.</text>
</comment>
<comment type="toxic dose">
    <text evidence="3">LD(50) is 0.15 mg/kg by subcutaneous injection.</text>
</comment>
<comment type="similarity">
    <text evidence="5">Belongs to the three-finger toxin family. Long-chain subfamily. Type II alpha-neurotoxin sub-subfamily.</text>
</comment>